<comment type="function">
    <text evidence="1">Produces ATP from ADP in the presence of a proton gradient across the membrane. The catalytic sites are hosted primarily by the beta subunits.</text>
</comment>
<comment type="catalytic activity">
    <reaction evidence="1">
        <text>ATP + H2O + 4 H(+)(in) = ADP + phosphate + 5 H(+)(out)</text>
        <dbReference type="Rhea" id="RHEA:57720"/>
        <dbReference type="ChEBI" id="CHEBI:15377"/>
        <dbReference type="ChEBI" id="CHEBI:15378"/>
        <dbReference type="ChEBI" id="CHEBI:30616"/>
        <dbReference type="ChEBI" id="CHEBI:43474"/>
        <dbReference type="ChEBI" id="CHEBI:456216"/>
        <dbReference type="EC" id="7.1.2.2"/>
    </reaction>
</comment>
<comment type="subunit">
    <text evidence="1">F-type ATPases have 2 components, CF(1) - the catalytic core - and CF(0) - the membrane proton channel. CF(1) has five subunits: alpha(3), beta(3), gamma(1), delta(1), epsilon(1). CF(0) has three main subunits: a(1), b(2) and c(9-12). The alpha and beta chains form an alternating ring which encloses part of the gamma chain. CF(1) is attached to CF(0) by a central stalk formed by the gamma and epsilon chains, while a peripheral stalk is formed by the delta and b chains.</text>
</comment>
<comment type="subcellular location">
    <subcellularLocation>
        <location evidence="1">Cell inner membrane</location>
        <topology evidence="1">Peripheral membrane protein</topology>
    </subcellularLocation>
</comment>
<comment type="similarity">
    <text evidence="1">Belongs to the ATPase alpha/beta chains family.</text>
</comment>
<organism>
    <name type="scientific">Mesorhizobium japonicum (strain LMG 29417 / CECT 9101 / MAFF 303099)</name>
    <name type="common">Mesorhizobium loti (strain MAFF 303099)</name>
    <dbReference type="NCBI Taxonomy" id="266835"/>
    <lineage>
        <taxon>Bacteria</taxon>
        <taxon>Pseudomonadati</taxon>
        <taxon>Pseudomonadota</taxon>
        <taxon>Alphaproteobacteria</taxon>
        <taxon>Hyphomicrobiales</taxon>
        <taxon>Phyllobacteriaceae</taxon>
        <taxon>Mesorhizobium</taxon>
    </lineage>
</organism>
<proteinExistence type="inferred from homology"/>
<sequence length="477" mass="50776">MAAKATGVVGKVRQVIGAVVDVQFGDHLPAILNALETTNVGNRLVLEVAQHLGENTVRCIAMDSTEGLVRGQEVRDTGAPITVPVGPGMLGRIINVIGEPVDEEGPVDAIEMRSIHQPAPTYVEQSTEAQILITGIKVLDLLAPYAKGGKIGLFGGAGVGKTVLIQELINNIAKAHGGYSVFAGVGERTREGNDLYHEFIESGVNKKGGGEGSKAALVYGQMNEPPGARARVGLTGLTVAEYFRDQGQDVLFFVDNIFRFTQAGSEVSALLGRIPSAVGYQPTLATDMGALQERITTTTKGSITSVQAIYVPADDLTDPAPATSFAHLDATTTLNRAIAEKGIYPAVDPLDSTSRMLDPMVVGEEHYAVARQVQSILQRYKSLQDIIAILGMDELSEEDKQTVARARKIERFLSQPFFVAEVFTGAPGKLVDLADTIKGFKGLCNGDYDHLPEAAFYMVGGIEEAVEKAQRLAAEAA</sequence>
<protein>
    <recommendedName>
        <fullName evidence="1">ATP synthase subunit beta</fullName>
        <ecNumber evidence="1">7.1.2.2</ecNumber>
    </recommendedName>
    <alternativeName>
        <fullName evidence="1">ATP synthase F1 sector subunit beta</fullName>
    </alternativeName>
    <alternativeName>
        <fullName evidence="1">F-ATPase subunit beta</fullName>
    </alternativeName>
</protein>
<dbReference type="EC" id="7.1.2.2" evidence="1"/>
<dbReference type="EMBL" id="BA000012">
    <property type="protein sequence ID" value="BAB50809.1"/>
    <property type="molecule type" value="Genomic_DNA"/>
</dbReference>
<dbReference type="SMR" id="Q98EV8"/>
<dbReference type="KEGG" id="mlo:mll4060"/>
<dbReference type="eggNOG" id="COG0055">
    <property type="taxonomic scope" value="Bacteria"/>
</dbReference>
<dbReference type="HOGENOM" id="CLU_022398_0_2_5"/>
<dbReference type="Proteomes" id="UP000000552">
    <property type="component" value="Chromosome"/>
</dbReference>
<dbReference type="GO" id="GO:0005886">
    <property type="term" value="C:plasma membrane"/>
    <property type="evidence" value="ECO:0007669"/>
    <property type="project" value="UniProtKB-SubCell"/>
</dbReference>
<dbReference type="GO" id="GO:0045259">
    <property type="term" value="C:proton-transporting ATP synthase complex"/>
    <property type="evidence" value="ECO:0007669"/>
    <property type="project" value="UniProtKB-KW"/>
</dbReference>
<dbReference type="GO" id="GO:0005524">
    <property type="term" value="F:ATP binding"/>
    <property type="evidence" value="ECO:0007669"/>
    <property type="project" value="UniProtKB-UniRule"/>
</dbReference>
<dbReference type="GO" id="GO:0016887">
    <property type="term" value="F:ATP hydrolysis activity"/>
    <property type="evidence" value="ECO:0007669"/>
    <property type="project" value="InterPro"/>
</dbReference>
<dbReference type="GO" id="GO:0046933">
    <property type="term" value="F:proton-transporting ATP synthase activity, rotational mechanism"/>
    <property type="evidence" value="ECO:0007669"/>
    <property type="project" value="UniProtKB-UniRule"/>
</dbReference>
<dbReference type="CDD" id="cd18110">
    <property type="entry name" value="ATP-synt_F1_beta_C"/>
    <property type="match status" value="1"/>
</dbReference>
<dbReference type="CDD" id="cd18115">
    <property type="entry name" value="ATP-synt_F1_beta_N"/>
    <property type="match status" value="1"/>
</dbReference>
<dbReference type="CDD" id="cd01133">
    <property type="entry name" value="F1-ATPase_beta_CD"/>
    <property type="match status" value="1"/>
</dbReference>
<dbReference type="FunFam" id="1.10.1140.10:FF:000001">
    <property type="entry name" value="ATP synthase subunit beta"/>
    <property type="match status" value="1"/>
</dbReference>
<dbReference type="FunFam" id="2.40.10.170:FF:000004">
    <property type="entry name" value="ATP synthase subunit beta"/>
    <property type="match status" value="1"/>
</dbReference>
<dbReference type="FunFam" id="3.40.50.300:FF:000026">
    <property type="entry name" value="ATP synthase subunit beta"/>
    <property type="match status" value="1"/>
</dbReference>
<dbReference type="Gene3D" id="2.40.10.170">
    <property type="match status" value="1"/>
</dbReference>
<dbReference type="Gene3D" id="1.10.1140.10">
    <property type="entry name" value="Bovine Mitochondrial F1-atpase, Atp Synthase Beta Chain, Chain D, domain 3"/>
    <property type="match status" value="1"/>
</dbReference>
<dbReference type="Gene3D" id="3.40.50.300">
    <property type="entry name" value="P-loop containing nucleotide triphosphate hydrolases"/>
    <property type="match status" value="1"/>
</dbReference>
<dbReference type="HAMAP" id="MF_01347">
    <property type="entry name" value="ATP_synth_beta_bact"/>
    <property type="match status" value="1"/>
</dbReference>
<dbReference type="InterPro" id="IPR003593">
    <property type="entry name" value="AAA+_ATPase"/>
</dbReference>
<dbReference type="InterPro" id="IPR055190">
    <property type="entry name" value="ATP-synt_VA_C"/>
</dbReference>
<dbReference type="InterPro" id="IPR005722">
    <property type="entry name" value="ATP_synth_F1_bsu"/>
</dbReference>
<dbReference type="InterPro" id="IPR020003">
    <property type="entry name" value="ATPase_a/bsu_AS"/>
</dbReference>
<dbReference type="InterPro" id="IPR050053">
    <property type="entry name" value="ATPase_alpha/beta_chains"/>
</dbReference>
<dbReference type="InterPro" id="IPR004100">
    <property type="entry name" value="ATPase_F1/V1/A1_a/bsu_N"/>
</dbReference>
<dbReference type="InterPro" id="IPR036121">
    <property type="entry name" value="ATPase_F1/V1/A1_a/bsu_N_sf"/>
</dbReference>
<dbReference type="InterPro" id="IPR000194">
    <property type="entry name" value="ATPase_F1/V1/A1_a/bsu_nucl-bd"/>
</dbReference>
<dbReference type="InterPro" id="IPR024034">
    <property type="entry name" value="ATPase_F1/V1_b/a_C"/>
</dbReference>
<dbReference type="InterPro" id="IPR027417">
    <property type="entry name" value="P-loop_NTPase"/>
</dbReference>
<dbReference type="NCBIfam" id="TIGR01039">
    <property type="entry name" value="atpD"/>
    <property type="match status" value="1"/>
</dbReference>
<dbReference type="PANTHER" id="PTHR15184">
    <property type="entry name" value="ATP SYNTHASE"/>
    <property type="match status" value="1"/>
</dbReference>
<dbReference type="PANTHER" id="PTHR15184:SF71">
    <property type="entry name" value="ATP SYNTHASE SUBUNIT BETA, MITOCHONDRIAL"/>
    <property type="match status" value="1"/>
</dbReference>
<dbReference type="Pfam" id="PF00006">
    <property type="entry name" value="ATP-synt_ab"/>
    <property type="match status" value="1"/>
</dbReference>
<dbReference type="Pfam" id="PF02874">
    <property type="entry name" value="ATP-synt_ab_N"/>
    <property type="match status" value="1"/>
</dbReference>
<dbReference type="Pfam" id="PF22919">
    <property type="entry name" value="ATP-synt_VA_C"/>
    <property type="match status" value="1"/>
</dbReference>
<dbReference type="PIRSF" id="PIRSF039072">
    <property type="entry name" value="ATPase_subunit_beta"/>
    <property type="match status" value="1"/>
</dbReference>
<dbReference type="SMART" id="SM00382">
    <property type="entry name" value="AAA"/>
    <property type="match status" value="1"/>
</dbReference>
<dbReference type="SUPFAM" id="SSF47917">
    <property type="entry name" value="C-terminal domain of alpha and beta subunits of F1 ATP synthase"/>
    <property type="match status" value="1"/>
</dbReference>
<dbReference type="SUPFAM" id="SSF50615">
    <property type="entry name" value="N-terminal domain of alpha and beta subunits of F1 ATP synthase"/>
    <property type="match status" value="1"/>
</dbReference>
<dbReference type="SUPFAM" id="SSF52540">
    <property type="entry name" value="P-loop containing nucleoside triphosphate hydrolases"/>
    <property type="match status" value="1"/>
</dbReference>
<dbReference type="PROSITE" id="PS00152">
    <property type="entry name" value="ATPASE_ALPHA_BETA"/>
    <property type="match status" value="1"/>
</dbReference>
<name>ATPB_RHILO</name>
<reference key="1">
    <citation type="journal article" date="2000" name="DNA Res.">
        <title>Complete genome structure of the nitrogen-fixing symbiotic bacterium Mesorhizobium loti.</title>
        <authorList>
            <person name="Kaneko T."/>
            <person name="Nakamura Y."/>
            <person name="Sato S."/>
            <person name="Asamizu E."/>
            <person name="Kato T."/>
            <person name="Sasamoto S."/>
            <person name="Watanabe A."/>
            <person name="Idesawa K."/>
            <person name="Ishikawa A."/>
            <person name="Kawashima K."/>
            <person name="Kimura T."/>
            <person name="Kishida Y."/>
            <person name="Kiyokawa C."/>
            <person name="Kohara M."/>
            <person name="Matsumoto M."/>
            <person name="Matsuno A."/>
            <person name="Mochizuki Y."/>
            <person name="Nakayama S."/>
            <person name="Nakazaki N."/>
            <person name="Shimpo S."/>
            <person name="Sugimoto M."/>
            <person name="Takeuchi C."/>
            <person name="Yamada M."/>
            <person name="Tabata S."/>
        </authorList>
    </citation>
    <scope>NUCLEOTIDE SEQUENCE [LARGE SCALE GENOMIC DNA]</scope>
    <source>
        <strain>LMG 29417 / CECT 9101 / MAFF 303099</strain>
    </source>
</reference>
<keyword id="KW-0066">ATP synthesis</keyword>
<keyword id="KW-0067">ATP-binding</keyword>
<keyword id="KW-0997">Cell inner membrane</keyword>
<keyword id="KW-1003">Cell membrane</keyword>
<keyword id="KW-0139">CF(1)</keyword>
<keyword id="KW-0375">Hydrogen ion transport</keyword>
<keyword id="KW-0406">Ion transport</keyword>
<keyword id="KW-0472">Membrane</keyword>
<keyword id="KW-0547">Nucleotide-binding</keyword>
<keyword id="KW-1278">Translocase</keyword>
<keyword id="KW-0813">Transport</keyword>
<evidence type="ECO:0000255" key="1">
    <source>
        <dbReference type="HAMAP-Rule" id="MF_01347"/>
    </source>
</evidence>
<feature type="chain" id="PRO_0000254352" description="ATP synthase subunit beta">
    <location>
        <begin position="1"/>
        <end position="477"/>
    </location>
</feature>
<feature type="binding site" evidence="1">
    <location>
        <begin position="155"/>
        <end position="162"/>
    </location>
    <ligand>
        <name>ATP</name>
        <dbReference type="ChEBI" id="CHEBI:30616"/>
    </ligand>
</feature>
<gene>
    <name evidence="1" type="primary">atpD</name>
    <name type="ordered locus">mll4060</name>
</gene>
<accession>Q98EV8</accession>